<dbReference type="EMBL" id="CP000117">
    <property type="protein sequence ID" value="ABA23429.1"/>
    <property type="molecule type" value="Genomic_DNA"/>
</dbReference>
<dbReference type="STRING" id="240292.Ava_3824"/>
<dbReference type="KEGG" id="ava:Ava_3824"/>
<dbReference type="eggNOG" id="COG1333">
    <property type="taxonomic scope" value="Bacteria"/>
</dbReference>
<dbReference type="HOGENOM" id="CLU_034630_0_0_3"/>
<dbReference type="Proteomes" id="UP000002533">
    <property type="component" value="Chromosome"/>
</dbReference>
<dbReference type="GO" id="GO:0031676">
    <property type="term" value="C:plasma membrane-derived thylakoid membrane"/>
    <property type="evidence" value="ECO:0007669"/>
    <property type="project" value="UniProtKB-SubCell"/>
</dbReference>
<dbReference type="GO" id="GO:0017004">
    <property type="term" value="P:cytochrome complex assembly"/>
    <property type="evidence" value="ECO:0007669"/>
    <property type="project" value="UniProtKB-UniRule"/>
</dbReference>
<dbReference type="HAMAP" id="MF_01392">
    <property type="entry name" value="CytC_Ccs1"/>
    <property type="match status" value="1"/>
</dbReference>
<dbReference type="InterPro" id="IPR023494">
    <property type="entry name" value="Cyt_c_bgen_Ccs1/CcsB/ResB"/>
</dbReference>
<dbReference type="InterPro" id="IPR007816">
    <property type="entry name" value="ResB-like_domain"/>
</dbReference>
<dbReference type="PANTHER" id="PTHR31566">
    <property type="entry name" value="CYTOCHROME C BIOGENESIS PROTEIN CCS1, CHLOROPLASTIC"/>
    <property type="match status" value="1"/>
</dbReference>
<dbReference type="PANTHER" id="PTHR31566:SF0">
    <property type="entry name" value="CYTOCHROME C BIOGENESIS PROTEIN CCS1, CHLOROPLASTIC"/>
    <property type="match status" value="1"/>
</dbReference>
<dbReference type="Pfam" id="PF05140">
    <property type="entry name" value="ResB"/>
    <property type="match status" value="2"/>
</dbReference>
<accession>Q3M6F7</accession>
<protein>
    <recommendedName>
        <fullName evidence="1">Cytochrome c biogenesis protein CcsB</fullName>
    </recommendedName>
</protein>
<feature type="chain" id="PRO_0000363611" description="Cytochrome c biogenesis protein CcsB">
    <location>
        <begin position="1"/>
        <end position="461"/>
    </location>
</feature>
<feature type="transmembrane region" description="Helical" evidence="1">
    <location>
        <begin position="32"/>
        <end position="52"/>
    </location>
</feature>
<feature type="transmembrane region" description="Helical" evidence="1">
    <location>
        <begin position="91"/>
        <end position="111"/>
    </location>
</feature>
<feature type="transmembrane region" description="Helical" evidence="1">
    <location>
        <begin position="178"/>
        <end position="198"/>
    </location>
</feature>
<reference key="1">
    <citation type="journal article" date="2014" name="Stand. Genomic Sci.">
        <title>Complete genome sequence of Anabaena variabilis ATCC 29413.</title>
        <authorList>
            <person name="Thiel T."/>
            <person name="Pratte B.S."/>
            <person name="Zhong J."/>
            <person name="Goodwin L."/>
            <person name="Copeland A."/>
            <person name="Lucas S."/>
            <person name="Han C."/>
            <person name="Pitluck S."/>
            <person name="Land M.L."/>
            <person name="Kyrpides N.C."/>
            <person name="Woyke T."/>
        </authorList>
    </citation>
    <scope>NUCLEOTIDE SEQUENCE [LARGE SCALE GENOMIC DNA]</scope>
    <source>
        <strain>ATCC 29413 / PCC 7937</strain>
    </source>
</reference>
<keyword id="KW-0201">Cytochrome c-type biogenesis</keyword>
<keyword id="KW-0472">Membrane</keyword>
<keyword id="KW-0793">Thylakoid</keyword>
<keyword id="KW-0812">Transmembrane</keyword>
<keyword id="KW-1133">Transmembrane helix</keyword>
<comment type="function">
    <text evidence="1">Required during biogenesis of c-type cytochromes (cytochrome c6 and cytochrome f) at the step of heme attachment.</text>
</comment>
<comment type="subunit">
    <text evidence="1">May interact with CcsA.</text>
</comment>
<comment type="subcellular location">
    <subcellularLocation>
        <location evidence="1">Cellular thylakoid membrane</location>
        <topology evidence="1">Multi-pass membrane protein</topology>
    </subcellularLocation>
</comment>
<comment type="similarity">
    <text evidence="1">Belongs to the Ccs1/CcsB family.</text>
</comment>
<name>CCS1_TRIV2</name>
<organism>
    <name type="scientific">Trichormus variabilis (strain ATCC 29413 / PCC 7937)</name>
    <name type="common">Anabaena variabilis</name>
    <dbReference type="NCBI Taxonomy" id="240292"/>
    <lineage>
        <taxon>Bacteria</taxon>
        <taxon>Bacillati</taxon>
        <taxon>Cyanobacteriota</taxon>
        <taxon>Cyanophyceae</taxon>
        <taxon>Nostocales</taxon>
        <taxon>Nostocaceae</taxon>
        <taxon>Trichormus</taxon>
    </lineage>
</organism>
<proteinExistence type="inferred from homology"/>
<sequence length="461" mass="51425">MTTDNSAPTASPWWSLPGKFLRREFLPVLTDLRLAIALLLIIALFSISGTVIEQGQSPAFYQANYPEHPALFGFLTWKVIQVVGLDHVYRTWWFLSLLVLFGTSLTACTFTRQLPALKTAQRWKYYEEPRQFQKLALSAELDAGSVNSLSQILQNRRYKIFQEKDDILYARKGIVGRIGPIIVHIGIVTILLGSIWGAMTGFIAQEMVPSGETFQVKNIIDAGPLAAGQFPQDWSVRVNRFWIDYTPKGGIDQFYSDMSVLDNQGKEVDHKKIFVNQPLRYHGVTFYQTDWGISGVRVRLNKSPIFQLPMALLNTNGQGRIWGTWIPTKPDLSEGVSLLAKDLQGMVLIYDAQGKLVDTVRAGMSTQVNGVTLKVLDVVGSTGLQIKADPGIPIVYTGFGILMLGVVMSYFSHSQIWALQKGDRLYVGGKTNRAQVAFEQEVLEILERLSSQSATASNQQS</sequence>
<evidence type="ECO:0000255" key="1">
    <source>
        <dbReference type="HAMAP-Rule" id="MF_01392"/>
    </source>
</evidence>
<gene>
    <name evidence="1" type="primary">ccsB</name>
    <name evidence="1" type="synonym">ccs1</name>
    <name type="ordered locus">Ava_3824</name>
</gene>